<organism>
    <name type="scientific">Polaromonas sp. (strain JS666 / ATCC BAA-500)</name>
    <dbReference type="NCBI Taxonomy" id="296591"/>
    <lineage>
        <taxon>Bacteria</taxon>
        <taxon>Pseudomonadati</taxon>
        <taxon>Pseudomonadota</taxon>
        <taxon>Betaproteobacteria</taxon>
        <taxon>Burkholderiales</taxon>
        <taxon>Comamonadaceae</taxon>
        <taxon>Polaromonas</taxon>
    </lineage>
</organism>
<protein>
    <recommendedName>
        <fullName evidence="1">Protein-L-isoaspartate O-methyltransferase 1</fullName>
        <ecNumber evidence="1">2.1.1.77</ecNumber>
    </recommendedName>
    <alternativeName>
        <fullName evidence="1">L-isoaspartyl protein carboxyl methyltransferase 1</fullName>
    </alternativeName>
    <alternativeName>
        <fullName evidence="1">Protein L-isoaspartyl methyltransferase 1</fullName>
    </alternativeName>
    <alternativeName>
        <fullName evidence="1">Protein-beta-aspartate methyltransferase 1</fullName>
        <shortName evidence="1">PIMT 1</shortName>
    </alternativeName>
</protein>
<dbReference type="EC" id="2.1.1.77" evidence="1"/>
<dbReference type="EMBL" id="CP000316">
    <property type="protein sequence ID" value="ABE44557.1"/>
    <property type="molecule type" value="Genomic_DNA"/>
</dbReference>
<dbReference type="SMR" id="Q12A85"/>
<dbReference type="STRING" id="296591.Bpro_2641"/>
<dbReference type="KEGG" id="pol:Bpro_2641"/>
<dbReference type="eggNOG" id="COG2518">
    <property type="taxonomic scope" value="Bacteria"/>
</dbReference>
<dbReference type="HOGENOM" id="CLU_055432_2_0_4"/>
<dbReference type="OrthoDB" id="9810066at2"/>
<dbReference type="Proteomes" id="UP000001983">
    <property type="component" value="Chromosome"/>
</dbReference>
<dbReference type="GO" id="GO:0005737">
    <property type="term" value="C:cytoplasm"/>
    <property type="evidence" value="ECO:0007669"/>
    <property type="project" value="UniProtKB-SubCell"/>
</dbReference>
<dbReference type="GO" id="GO:0004719">
    <property type="term" value="F:protein-L-isoaspartate (D-aspartate) O-methyltransferase activity"/>
    <property type="evidence" value="ECO:0007669"/>
    <property type="project" value="UniProtKB-UniRule"/>
</dbReference>
<dbReference type="GO" id="GO:0032259">
    <property type="term" value="P:methylation"/>
    <property type="evidence" value="ECO:0007669"/>
    <property type="project" value="UniProtKB-KW"/>
</dbReference>
<dbReference type="GO" id="GO:0036211">
    <property type="term" value="P:protein modification process"/>
    <property type="evidence" value="ECO:0007669"/>
    <property type="project" value="UniProtKB-UniRule"/>
</dbReference>
<dbReference type="GO" id="GO:0030091">
    <property type="term" value="P:protein repair"/>
    <property type="evidence" value="ECO:0007669"/>
    <property type="project" value="UniProtKB-UniRule"/>
</dbReference>
<dbReference type="CDD" id="cd02440">
    <property type="entry name" value="AdoMet_MTases"/>
    <property type="match status" value="1"/>
</dbReference>
<dbReference type="FunFam" id="3.40.50.150:FF:000010">
    <property type="entry name" value="Protein-L-isoaspartate O-methyltransferase"/>
    <property type="match status" value="1"/>
</dbReference>
<dbReference type="Gene3D" id="3.40.50.150">
    <property type="entry name" value="Vaccinia Virus protein VP39"/>
    <property type="match status" value="1"/>
</dbReference>
<dbReference type="HAMAP" id="MF_00090">
    <property type="entry name" value="PIMT"/>
    <property type="match status" value="1"/>
</dbReference>
<dbReference type="InterPro" id="IPR000682">
    <property type="entry name" value="PCMT"/>
</dbReference>
<dbReference type="InterPro" id="IPR029063">
    <property type="entry name" value="SAM-dependent_MTases_sf"/>
</dbReference>
<dbReference type="NCBIfam" id="TIGR00080">
    <property type="entry name" value="pimt"/>
    <property type="match status" value="1"/>
</dbReference>
<dbReference type="NCBIfam" id="NF001453">
    <property type="entry name" value="PRK00312.1"/>
    <property type="match status" value="1"/>
</dbReference>
<dbReference type="PANTHER" id="PTHR11579">
    <property type="entry name" value="PROTEIN-L-ISOASPARTATE O-METHYLTRANSFERASE"/>
    <property type="match status" value="1"/>
</dbReference>
<dbReference type="PANTHER" id="PTHR11579:SF0">
    <property type="entry name" value="PROTEIN-L-ISOASPARTATE(D-ASPARTATE) O-METHYLTRANSFERASE"/>
    <property type="match status" value="1"/>
</dbReference>
<dbReference type="Pfam" id="PF01135">
    <property type="entry name" value="PCMT"/>
    <property type="match status" value="1"/>
</dbReference>
<dbReference type="SUPFAM" id="SSF53335">
    <property type="entry name" value="S-adenosyl-L-methionine-dependent methyltransferases"/>
    <property type="match status" value="1"/>
</dbReference>
<feature type="chain" id="PRO_0000351901" description="Protein-L-isoaspartate O-methyltransferase 1">
    <location>
        <begin position="1"/>
        <end position="236"/>
    </location>
</feature>
<feature type="active site" evidence="1">
    <location>
        <position position="85"/>
    </location>
</feature>
<proteinExistence type="inferred from homology"/>
<name>PIMT1_POLSJ</name>
<sequence length="236" mass="25643">MNVSVPLPSGGTMTEPDFSVLRQSMIAEIAAKTAFVSTQLGKAVLDPRVMNAMAKVPRHEFVLLELRPYAYADTPLPSCFDKTISQPFIVAVMTDLLELRPTDTVLEIGTGLGYQTAILAELAQHVYSIEIIEEMAVQARQRLARHGYTNVDIKIGNGCGGWPEHAPFDKVIVTAAPDLIPPPLIYQLKPGGKMVIPAGLPNDQQLILVEKDASDAVSTRDILPVRFSLLEDAEPG</sequence>
<comment type="function">
    <text evidence="1">Catalyzes the methyl esterification of L-isoaspartyl residues in peptides and proteins that result from spontaneous decomposition of normal L-aspartyl and L-asparaginyl residues. It plays a role in the repair and/or degradation of damaged proteins.</text>
</comment>
<comment type="catalytic activity">
    <reaction evidence="1">
        <text>[protein]-L-isoaspartate + S-adenosyl-L-methionine = [protein]-L-isoaspartate alpha-methyl ester + S-adenosyl-L-homocysteine</text>
        <dbReference type="Rhea" id="RHEA:12705"/>
        <dbReference type="Rhea" id="RHEA-COMP:12143"/>
        <dbReference type="Rhea" id="RHEA-COMP:12144"/>
        <dbReference type="ChEBI" id="CHEBI:57856"/>
        <dbReference type="ChEBI" id="CHEBI:59789"/>
        <dbReference type="ChEBI" id="CHEBI:90596"/>
        <dbReference type="ChEBI" id="CHEBI:90598"/>
        <dbReference type="EC" id="2.1.1.77"/>
    </reaction>
</comment>
<comment type="subcellular location">
    <subcellularLocation>
        <location evidence="1">Cytoplasm</location>
    </subcellularLocation>
</comment>
<comment type="similarity">
    <text evidence="1">Belongs to the methyltransferase superfamily. L-isoaspartyl/D-aspartyl protein methyltransferase family.</text>
</comment>
<reference key="1">
    <citation type="journal article" date="2008" name="Appl. Environ. Microbiol.">
        <title>The genome of Polaromonas sp. strain JS666: insights into the evolution of a hydrocarbon- and xenobiotic-degrading bacterium, and features of relevance to biotechnology.</title>
        <authorList>
            <person name="Mattes T.E."/>
            <person name="Alexander A.K."/>
            <person name="Richardson P.M."/>
            <person name="Munk A.C."/>
            <person name="Han C.S."/>
            <person name="Stothard P."/>
            <person name="Coleman N.V."/>
        </authorList>
    </citation>
    <scope>NUCLEOTIDE SEQUENCE [LARGE SCALE GENOMIC DNA]</scope>
    <source>
        <strain>JS666 / ATCC BAA-500</strain>
    </source>
</reference>
<gene>
    <name evidence="1" type="primary">pcm1</name>
    <name type="ordered locus">Bpro_2641</name>
</gene>
<evidence type="ECO:0000255" key="1">
    <source>
        <dbReference type="HAMAP-Rule" id="MF_00090"/>
    </source>
</evidence>
<keyword id="KW-0963">Cytoplasm</keyword>
<keyword id="KW-0489">Methyltransferase</keyword>
<keyword id="KW-1185">Reference proteome</keyword>
<keyword id="KW-0949">S-adenosyl-L-methionine</keyword>
<keyword id="KW-0808">Transferase</keyword>
<accession>Q12A85</accession>